<accession>Q888L8</accession>
<feature type="chain" id="PRO_0000209333" description="Probable sugar efflux transporter">
    <location>
        <begin position="1"/>
        <end position="407"/>
    </location>
</feature>
<feature type="transmembrane region" description="Helical" evidence="1">
    <location>
        <begin position="18"/>
        <end position="38"/>
    </location>
</feature>
<feature type="transmembrane region" description="Helical" evidence="1">
    <location>
        <begin position="55"/>
        <end position="75"/>
    </location>
</feature>
<feature type="transmembrane region" description="Helical" evidence="1">
    <location>
        <begin position="88"/>
        <end position="108"/>
    </location>
</feature>
<feature type="transmembrane region" description="Helical" evidence="1">
    <location>
        <begin position="114"/>
        <end position="134"/>
    </location>
</feature>
<feature type="transmembrane region" description="Helical" evidence="1">
    <location>
        <begin position="141"/>
        <end position="161"/>
    </location>
</feature>
<feature type="transmembrane region" description="Helical" evidence="1">
    <location>
        <begin position="175"/>
        <end position="195"/>
    </location>
</feature>
<feature type="transmembrane region" description="Helical" evidence="1">
    <location>
        <begin position="217"/>
        <end position="237"/>
    </location>
</feature>
<feature type="transmembrane region" description="Helical" evidence="1">
    <location>
        <begin position="253"/>
        <end position="273"/>
    </location>
</feature>
<feature type="transmembrane region" description="Helical" evidence="1">
    <location>
        <begin position="280"/>
        <end position="300"/>
    </location>
</feature>
<feature type="transmembrane region" description="Helical" evidence="1">
    <location>
        <begin position="304"/>
        <end position="324"/>
    </location>
</feature>
<feature type="transmembrane region" description="Helical" evidence="1">
    <location>
        <begin position="338"/>
        <end position="358"/>
    </location>
</feature>
<feature type="transmembrane region" description="Helical" evidence="1">
    <location>
        <begin position="365"/>
        <end position="385"/>
    </location>
</feature>
<comment type="function">
    <text evidence="1">Involved in the efflux of sugars. The physiological role may be the reduction of the intracellular concentration of toxic sugars or sugar metabolites.</text>
</comment>
<comment type="subcellular location">
    <subcellularLocation>
        <location evidence="1">Cell inner membrane</location>
        <topology evidence="1">Multi-pass membrane protein</topology>
    </subcellularLocation>
</comment>
<comment type="similarity">
    <text evidence="1">Belongs to the major facilitator superfamily. SotB (TC 2.A.1.2) family.</text>
</comment>
<protein>
    <recommendedName>
        <fullName evidence="1">Probable sugar efflux transporter</fullName>
    </recommendedName>
</protein>
<gene>
    <name evidence="1" type="primary">sotB</name>
    <name type="ordered locus">PSPTO_0999</name>
</gene>
<organism>
    <name type="scientific">Pseudomonas syringae pv. tomato (strain ATCC BAA-871 / DC3000)</name>
    <dbReference type="NCBI Taxonomy" id="223283"/>
    <lineage>
        <taxon>Bacteria</taxon>
        <taxon>Pseudomonadati</taxon>
        <taxon>Pseudomonadota</taxon>
        <taxon>Gammaproteobacteria</taxon>
        <taxon>Pseudomonadales</taxon>
        <taxon>Pseudomonadaceae</taxon>
        <taxon>Pseudomonas</taxon>
    </lineage>
</organism>
<dbReference type="EMBL" id="AE016853">
    <property type="protein sequence ID" value="AAO54533.1"/>
    <property type="molecule type" value="Genomic_DNA"/>
</dbReference>
<dbReference type="RefSeq" id="NP_790838.1">
    <property type="nucleotide sequence ID" value="NC_004578.1"/>
</dbReference>
<dbReference type="RefSeq" id="WP_005771500.1">
    <property type="nucleotide sequence ID" value="NC_004578.1"/>
</dbReference>
<dbReference type="SMR" id="Q888L8"/>
<dbReference type="STRING" id="223283.PSPTO_0999"/>
<dbReference type="GeneID" id="1182633"/>
<dbReference type="KEGG" id="pst:PSPTO_0999"/>
<dbReference type="PATRIC" id="fig|223283.9.peg.1009"/>
<dbReference type="eggNOG" id="COG2814">
    <property type="taxonomic scope" value="Bacteria"/>
</dbReference>
<dbReference type="HOGENOM" id="CLU_001265_61_1_6"/>
<dbReference type="OrthoDB" id="9788453at2"/>
<dbReference type="PhylomeDB" id="Q888L8"/>
<dbReference type="Proteomes" id="UP000002515">
    <property type="component" value="Chromosome"/>
</dbReference>
<dbReference type="GO" id="GO:0005886">
    <property type="term" value="C:plasma membrane"/>
    <property type="evidence" value="ECO:0007669"/>
    <property type="project" value="UniProtKB-SubCell"/>
</dbReference>
<dbReference type="GO" id="GO:0015144">
    <property type="term" value="F:carbohydrate transmembrane transporter activity"/>
    <property type="evidence" value="ECO:0007669"/>
    <property type="project" value="UniProtKB-UniRule"/>
</dbReference>
<dbReference type="CDD" id="cd17324">
    <property type="entry name" value="MFS_NepI_like"/>
    <property type="match status" value="1"/>
</dbReference>
<dbReference type="Gene3D" id="1.20.1250.20">
    <property type="entry name" value="MFS general substrate transporter like domains"/>
    <property type="match status" value="1"/>
</dbReference>
<dbReference type="HAMAP" id="MF_00517">
    <property type="entry name" value="MFS_SotB"/>
    <property type="match status" value="1"/>
</dbReference>
<dbReference type="InterPro" id="IPR011701">
    <property type="entry name" value="MFS"/>
</dbReference>
<dbReference type="InterPro" id="IPR020846">
    <property type="entry name" value="MFS_dom"/>
</dbReference>
<dbReference type="InterPro" id="IPR050189">
    <property type="entry name" value="MFS_Efflux_Transporters"/>
</dbReference>
<dbReference type="InterPro" id="IPR036259">
    <property type="entry name" value="MFS_trans_sf"/>
</dbReference>
<dbReference type="InterPro" id="IPR023495">
    <property type="entry name" value="Sugar_effux_transptr_put"/>
</dbReference>
<dbReference type="NCBIfam" id="NF002921">
    <property type="entry name" value="PRK03545.1"/>
    <property type="match status" value="1"/>
</dbReference>
<dbReference type="PANTHER" id="PTHR43124">
    <property type="entry name" value="PURINE EFFLUX PUMP PBUE"/>
    <property type="match status" value="1"/>
</dbReference>
<dbReference type="PANTHER" id="PTHR43124:SF4">
    <property type="entry name" value="SUGAR EFFLUX TRANSPORTER"/>
    <property type="match status" value="1"/>
</dbReference>
<dbReference type="Pfam" id="PF07690">
    <property type="entry name" value="MFS_1"/>
    <property type="match status" value="1"/>
</dbReference>
<dbReference type="SUPFAM" id="SSF103473">
    <property type="entry name" value="MFS general substrate transporter"/>
    <property type="match status" value="1"/>
</dbReference>
<dbReference type="PROSITE" id="PS50850">
    <property type="entry name" value="MFS"/>
    <property type="match status" value="1"/>
</dbReference>
<keyword id="KW-0997">Cell inner membrane</keyword>
<keyword id="KW-1003">Cell membrane</keyword>
<keyword id="KW-0472">Membrane</keyword>
<keyword id="KW-1185">Reference proteome</keyword>
<keyword id="KW-0762">Sugar transport</keyword>
<keyword id="KW-0812">Transmembrane</keyword>
<keyword id="KW-1133">Transmembrane helix</keyword>
<keyword id="KW-0813">Transport</keyword>
<sequence>MITSPPNEQTGEHTGSWLGVFALALAAFIFNTTEFVPIGLLSNIGQSFDMTPAQVGLMLTIYAWVVSLMSLPMMLATRNIERRKLLMFVFGLFVVSHVISAMASSFAILLVSRVGIAFAHAVFWSVTASLAVRIAPPGKQVQALGLLATGTSLAMVLGIPLGRVLGEALGWRTTFLGIAGVAALVVFLLARALPLLPSQNSGSLRSLPILFKRPRLMAIYLLTAIVVTAHFTAYSYIEPFTQTVSRLSGEMTTILLLVFGGAGIMGSIVFSLFSDRFPNGLLITAIGTLAVCLLMLLPLSGDATMLGTLTVVWGMAIMCFGLLLQARVLSLAPDATDVAMALFSGIFNIGIGGGALLGSVVSSHLGVANVGIVGGLLALGGLGLICYTTFLFGKTQPHAEMQADAKH</sequence>
<name>SOTB_PSESM</name>
<evidence type="ECO:0000255" key="1">
    <source>
        <dbReference type="HAMAP-Rule" id="MF_00517"/>
    </source>
</evidence>
<proteinExistence type="inferred from homology"/>
<reference key="1">
    <citation type="journal article" date="2003" name="Proc. Natl. Acad. Sci. U.S.A.">
        <title>The complete genome sequence of the Arabidopsis and tomato pathogen Pseudomonas syringae pv. tomato DC3000.</title>
        <authorList>
            <person name="Buell C.R."/>
            <person name="Joardar V."/>
            <person name="Lindeberg M."/>
            <person name="Selengut J."/>
            <person name="Paulsen I.T."/>
            <person name="Gwinn M.L."/>
            <person name="Dodson R.J."/>
            <person name="DeBoy R.T."/>
            <person name="Durkin A.S."/>
            <person name="Kolonay J.F."/>
            <person name="Madupu R."/>
            <person name="Daugherty S.C."/>
            <person name="Brinkac L.M."/>
            <person name="Beanan M.J."/>
            <person name="Haft D.H."/>
            <person name="Nelson W.C."/>
            <person name="Davidsen T.M."/>
            <person name="Zafar N."/>
            <person name="Zhou L."/>
            <person name="Liu J."/>
            <person name="Yuan Q."/>
            <person name="Khouri H.M."/>
            <person name="Fedorova N.B."/>
            <person name="Tran B."/>
            <person name="Russell D."/>
            <person name="Berry K.J."/>
            <person name="Utterback T.R."/>
            <person name="Van Aken S.E."/>
            <person name="Feldblyum T.V."/>
            <person name="D'Ascenzo M."/>
            <person name="Deng W.-L."/>
            <person name="Ramos A.R."/>
            <person name="Alfano J.R."/>
            <person name="Cartinhour S."/>
            <person name="Chatterjee A.K."/>
            <person name="Delaney T.P."/>
            <person name="Lazarowitz S.G."/>
            <person name="Martin G.B."/>
            <person name="Schneider D.J."/>
            <person name="Tang X."/>
            <person name="Bender C.L."/>
            <person name="White O."/>
            <person name="Fraser C.M."/>
            <person name="Collmer A."/>
        </authorList>
    </citation>
    <scope>NUCLEOTIDE SEQUENCE [LARGE SCALE GENOMIC DNA]</scope>
    <source>
        <strain>ATCC BAA-871 / DC3000</strain>
    </source>
</reference>